<proteinExistence type="inferred from homology"/>
<protein>
    <recommendedName>
        <fullName>O-phosphoserine sulfhydrylase</fullName>
        <shortName>OPS sulfhydrylase</shortName>
        <ecNumber evidence="2">2.5.1.113</ecNumber>
    </recommendedName>
    <alternativeName>
        <fullName>CysO-thiocarboxylate-dependent cysteine synthase</fullName>
    </alternativeName>
    <alternativeName>
        <fullName>Cysteine synthase B</fullName>
        <shortName>CSase B</shortName>
    </alternativeName>
    <alternativeName>
        <fullName>O-phosphoserine-specific cysteine synthase</fullName>
    </alternativeName>
    <alternativeName>
        <fullName>[CysO sulfur-carrier protein]-thiocarboxylate-dependent cysteine synthase</fullName>
    </alternativeName>
</protein>
<accession>P63874</accession>
<accession>A0A1R3XZ12</accession>
<accession>Q10624</accession>
<accession>X2BHT6</accession>
<comment type="function">
    <text evidence="2">Catalyzes the formation of a covalent CysO-cysteine adduct via a sulfur transfer, using the thiocarboxylated sulfur carrier protein CysO-COSH as sulfur donor and O-phospho-L-serine (OPS) as sulfur acceptor. Can also use sodium sulfide as sulfur donor in vitro, albeit with less efficiency.</text>
</comment>
<comment type="catalytic activity">
    <reaction evidence="2">
        <text>[CysO sulfur-carrier protein]-C-terminal-Gly-aminoethanethioate + O-phospho-L-serine + H(+) = [CysO sulfur-carrier protein]-Gly-NH-CH2-C(O)-S-L-Cys + phosphate</text>
        <dbReference type="Rhea" id="RHEA:48740"/>
        <dbReference type="Rhea" id="RHEA-COMP:12207"/>
        <dbReference type="Rhea" id="RHEA-COMP:19917"/>
        <dbReference type="ChEBI" id="CHEBI:15378"/>
        <dbReference type="ChEBI" id="CHEBI:43474"/>
        <dbReference type="ChEBI" id="CHEBI:57524"/>
        <dbReference type="ChEBI" id="CHEBI:90783"/>
        <dbReference type="ChEBI" id="CHEBI:232372"/>
        <dbReference type="EC" id="2.5.1.113"/>
    </reaction>
</comment>
<comment type="cofactor">
    <cofactor evidence="2">
        <name>pyridoxal 5'-phosphate</name>
        <dbReference type="ChEBI" id="CHEBI:597326"/>
    </cofactor>
</comment>
<comment type="pathway">
    <text>Amino-acid biosynthesis; L-cysteine biosynthesis.</text>
</comment>
<comment type="subunit">
    <text evidence="2">Homodimer.</text>
</comment>
<comment type="domain">
    <text evidence="2">The five C-terminal amino acid residues are inserted into the active site cleft in the closed conformation, protect the aminoacrylate intermediate and are involved in sulfur donor selectivity.</text>
</comment>
<comment type="similarity">
    <text evidence="3">Belongs to the cysteine synthase/cystathionine beta-synthase family.</text>
</comment>
<organism>
    <name type="scientific">Mycobacterium bovis (strain ATCC BAA-935 / AF2122/97)</name>
    <dbReference type="NCBI Taxonomy" id="233413"/>
    <lineage>
        <taxon>Bacteria</taxon>
        <taxon>Bacillati</taxon>
        <taxon>Actinomycetota</taxon>
        <taxon>Actinomycetes</taxon>
        <taxon>Mycobacteriales</taxon>
        <taxon>Mycobacteriaceae</taxon>
        <taxon>Mycobacterium</taxon>
        <taxon>Mycobacterium tuberculosis complex</taxon>
    </lineage>
</organism>
<keyword id="KW-0028">Amino-acid biosynthesis</keyword>
<keyword id="KW-0198">Cysteine biosynthesis</keyword>
<keyword id="KW-0663">Pyridoxal phosphate</keyword>
<keyword id="KW-1185">Reference proteome</keyword>
<keyword id="KW-0808">Transferase</keyword>
<reference key="1">
    <citation type="journal article" date="2003" name="Proc. Natl. Acad. Sci. U.S.A.">
        <title>The complete genome sequence of Mycobacterium bovis.</title>
        <authorList>
            <person name="Garnier T."/>
            <person name="Eiglmeier K."/>
            <person name="Camus J.-C."/>
            <person name="Medina N."/>
            <person name="Mansoor H."/>
            <person name="Pryor M."/>
            <person name="Duthoy S."/>
            <person name="Grondin S."/>
            <person name="Lacroix C."/>
            <person name="Monsempe C."/>
            <person name="Simon S."/>
            <person name="Harris B."/>
            <person name="Atkin R."/>
            <person name="Doggett J."/>
            <person name="Mayes R."/>
            <person name="Keating L."/>
            <person name="Wheeler P.R."/>
            <person name="Parkhill J."/>
            <person name="Barrell B.G."/>
            <person name="Cole S.T."/>
            <person name="Gordon S.V."/>
            <person name="Hewinson R.G."/>
        </authorList>
    </citation>
    <scope>NUCLEOTIDE SEQUENCE [LARGE SCALE GENOMIC DNA]</scope>
    <source>
        <strain>ATCC BAA-935 / AF2122/97</strain>
    </source>
</reference>
<reference key="2">
    <citation type="journal article" date="2017" name="Genome Announc.">
        <title>Updated reference genome sequence and annotation of Mycobacterium bovis AF2122/97.</title>
        <authorList>
            <person name="Malone K.M."/>
            <person name="Farrell D."/>
            <person name="Stuber T.P."/>
            <person name="Schubert O.T."/>
            <person name="Aebersold R."/>
            <person name="Robbe-Austerman S."/>
            <person name="Gordon S.V."/>
        </authorList>
    </citation>
    <scope>NUCLEOTIDE SEQUENCE [LARGE SCALE GENOMIC DNA]</scope>
    <scope>GENOME REANNOTATION</scope>
    <source>
        <strain>ATCC BAA-935 / AF2122/97</strain>
    </source>
</reference>
<feature type="chain" id="PRO_0000167113" description="O-phosphoserine sulfhydrylase">
    <location>
        <begin position="1"/>
        <end position="323"/>
    </location>
</feature>
<feature type="binding site" evidence="1">
    <location>
        <position position="81"/>
    </location>
    <ligand>
        <name>pyridoxal 5'-phosphate</name>
        <dbReference type="ChEBI" id="CHEBI:597326"/>
    </ligand>
</feature>
<feature type="binding site" evidence="1">
    <location>
        <begin position="184"/>
        <end position="188"/>
    </location>
    <ligand>
        <name>pyridoxal 5'-phosphate</name>
        <dbReference type="ChEBI" id="CHEBI:597326"/>
    </ligand>
</feature>
<feature type="binding site" evidence="1">
    <location>
        <position position="220"/>
    </location>
    <ligand>
        <name>substrate</name>
    </ligand>
</feature>
<feature type="binding site" evidence="1">
    <location>
        <position position="265"/>
    </location>
    <ligand>
        <name>pyridoxal 5'-phosphate</name>
        <dbReference type="ChEBI" id="CHEBI:597326"/>
    </ligand>
</feature>
<feature type="modified residue" description="N6-(pyridoxal phosphate)lysine" evidence="1">
    <location>
        <position position="51"/>
    </location>
</feature>
<name>CYSM_MYCBO</name>
<dbReference type="EC" id="2.5.1.113" evidence="2"/>
<dbReference type="EMBL" id="LT708304">
    <property type="protein sequence ID" value="SIT99974.1"/>
    <property type="molecule type" value="Genomic_DNA"/>
</dbReference>
<dbReference type="RefSeq" id="NP_855025.1">
    <property type="nucleotide sequence ID" value="NC_002945.3"/>
</dbReference>
<dbReference type="RefSeq" id="WP_003406912.1">
    <property type="nucleotide sequence ID" value="NC_002945.4"/>
</dbReference>
<dbReference type="SMR" id="P63874"/>
<dbReference type="GeneID" id="45425314"/>
<dbReference type="KEGG" id="mbo:BQ2027_MB1371"/>
<dbReference type="PATRIC" id="fig|233413.5.peg.1503"/>
<dbReference type="UniPathway" id="UPA00136"/>
<dbReference type="Proteomes" id="UP000001419">
    <property type="component" value="Chromosome"/>
</dbReference>
<dbReference type="GO" id="GO:0004124">
    <property type="term" value="F:cysteine synthase activity"/>
    <property type="evidence" value="ECO:0007669"/>
    <property type="project" value="InterPro"/>
</dbReference>
<dbReference type="GO" id="GO:0006535">
    <property type="term" value="P:cysteine biosynthetic process from serine"/>
    <property type="evidence" value="ECO:0007669"/>
    <property type="project" value="InterPro"/>
</dbReference>
<dbReference type="CDD" id="cd01561">
    <property type="entry name" value="CBS_like"/>
    <property type="match status" value="1"/>
</dbReference>
<dbReference type="FunFam" id="3.40.50.1100:FF:000023">
    <property type="entry name" value="Cysteine synthase"/>
    <property type="match status" value="1"/>
</dbReference>
<dbReference type="Gene3D" id="3.40.50.1100">
    <property type="match status" value="2"/>
</dbReference>
<dbReference type="InterPro" id="IPR005856">
    <property type="entry name" value="Cys_synth"/>
</dbReference>
<dbReference type="InterPro" id="IPR050214">
    <property type="entry name" value="Cys_Synth/Cystath_Beta-Synth"/>
</dbReference>
<dbReference type="InterPro" id="IPR001216">
    <property type="entry name" value="P-phosphate_BS"/>
</dbReference>
<dbReference type="InterPro" id="IPR001926">
    <property type="entry name" value="TrpB-like_PALP"/>
</dbReference>
<dbReference type="InterPro" id="IPR036052">
    <property type="entry name" value="TrpB-like_PALP_sf"/>
</dbReference>
<dbReference type="NCBIfam" id="TIGR01136">
    <property type="entry name" value="cysKM"/>
    <property type="match status" value="1"/>
</dbReference>
<dbReference type="PANTHER" id="PTHR10314">
    <property type="entry name" value="CYSTATHIONINE BETA-SYNTHASE"/>
    <property type="match status" value="1"/>
</dbReference>
<dbReference type="Pfam" id="PF00291">
    <property type="entry name" value="PALP"/>
    <property type="match status" value="1"/>
</dbReference>
<dbReference type="SUPFAM" id="SSF53686">
    <property type="entry name" value="Tryptophan synthase beta subunit-like PLP-dependent enzymes"/>
    <property type="match status" value="1"/>
</dbReference>
<dbReference type="PROSITE" id="PS00901">
    <property type="entry name" value="CYS_SYNTHASE"/>
    <property type="match status" value="1"/>
</dbReference>
<sequence>MTRYDSLLQALGNTPLVGLQRLSPRWDDGRDGPHVRLWAKLEDRNPTGSIKDRPAVRMIEQAEADGLLRPGATILEPTSGNTGISLAMAARLKGYRLICVMPENTSVERRQLLELYGAQIIFSAAEGGSNTAVATAKELAATNPSWVMLYQYGNPANTDSHYCGTGPELLADLPEITHFVAGLGTTGTLMGTGRFLREHVANVKIVAAEPRYGEGVYALRNMDEGFVPELYDPEILTARYSVGAVDAVRRTRELVHTEGIFAGISTGAVLHAALGVGAGALAAGERADIALVVADAGWKYLSTGAYAGSLDDAETALEGQLWA</sequence>
<gene>
    <name type="primary">cysM</name>
    <name type="ordered locus">BQ2027_MB1371</name>
</gene>
<evidence type="ECO:0000250" key="1"/>
<evidence type="ECO:0000250" key="2">
    <source>
        <dbReference type="UniProtKB" id="P9WP53"/>
    </source>
</evidence>
<evidence type="ECO:0000305" key="3"/>